<proteinExistence type="inferred from homology"/>
<comment type="function">
    <text evidence="1">Cell division inhibitor that blocks the formation of polar Z ring septums. Rapidly oscillates between the poles of the cell to destabilize FtsZ filaments that have formed before they mature into polar Z rings. Prevents FtsZ polymerization.</text>
</comment>
<comment type="subunit">
    <text evidence="1">Interacts with MinD and FtsZ.</text>
</comment>
<comment type="similarity">
    <text evidence="1">Belongs to the MinC family.</text>
</comment>
<name>MINC_PSEPF</name>
<gene>
    <name evidence="1" type="primary">minC</name>
    <name type="ordered locus">Pfl01_1695</name>
</gene>
<organism>
    <name type="scientific">Pseudomonas fluorescens (strain Pf0-1)</name>
    <dbReference type="NCBI Taxonomy" id="205922"/>
    <lineage>
        <taxon>Bacteria</taxon>
        <taxon>Pseudomonadati</taxon>
        <taxon>Pseudomonadota</taxon>
        <taxon>Gammaproteobacteria</taxon>
        <taxon>Pseudomonadales</taxon>
        <taxon>Pseudomonadaceae</taxon>
        <taxon>Pseudomonas</taxon>
    </lineage>
</organism>
<evidence type="ECO:0000255" key="1">
    <source>
        <dbReference type="HAMAP-Rule" id="MF_00267"/>
    </source>
</evidence>
<evidence type="ECO:0000256" key="2">
    <source>
        <dbReference type="SAM" id="MobiDB-lite"/>
    </source>
</evidence>
<feature type="chain" id="PRO_1000047846" description="Probable septum site-determining protein MinC">
    <location>
        <begin position="1"/>
        <end position="245"/>
    </location>
</feature>
<feature type="region of interest" description="Disordered" evidence="2">
    <location>
        <begin position="112"/>
        <end position="140"/>
    </location>
</feature>
<feature type="compositionally biased region" description="Basic and acidic residues" evidence="2">
    <location>
        <begin position="112"/>
        <end position="132"/>
    </location>
</feature>
<sequence>MSQTEPKDQDPVFQLKGSMLAITVLELSRNDLDSLDRQLAAKVAQAPNFFSNAPLVLALDKLPPSEGAVDLPGLMRVCRQHGLRTLAIRASRIEDIAAAIAIDIPVLPPSGARERPLESAEPVAPKKPEKPPEPTVKPTRVITTPVRGGQQIYAQGGDLVVVSSVSPGAELLADGNIHVYGPMRGRALAGVKGDTKARIFCQQLSAELISIAGHYKVSEDLRRDPMWGSGVQVSLSGDVLNIIRL</sequence>
<accession>Q3KFL8</accession>
<reference key="1">
    <citation type="journal article" date="2009" name="Genome Biol.">
        <title>Genomic and genetic analyses of diversity and plant interactions of Pseudomonas fluorescens.</title>
        <authorList>
            <person name="Silby M.W."/>
            <person name="Cerdeno-Tarraga A.M."/>
            <person name="Vernikos G.S."/>
            <person name="Giddens S.R."/>
            <person name="Jackson R.W."/>
            <person name="Preston G.M."/>
            <person name="Zhang X.-X."/>
            <person name="Moon C.D."/>
            <person name="Gehrig S.M."/>
            <person name="Godfrey S.A.C."/>
            <person name="Knight C.G."/>
            <person name="Malone J.G."/>
            <person name="Robinson Z."/>
            <person name="Spiers A.J."/>
            <person name="Harris S."/>
            <person name="Challis G.L."/>
            <person name="Yaxley A.M."/>
            <person name="Harris D."/>
            <person name="Seeger K."/>
            <person name="Murphy L."/>
            <person name="Rutter S."/>
            <person name="Squares R."/>
            <person name="Quail M.A."/>
            <person name="Saunders E."/>
            <person name="Mavromatis K."/>
            <person name="Brettin T.S."/>
            <person name="Bentley S.D."/>
            <person name="Hothersall J."/>
            <person name="Stephens E."/>
            <person name="Thomas C.M."/>
            <person name="Parkhill J."/>
            <person name="Levy S.B."/>
            <person name="Rainey P.B."/>
            <person name="Thomson N.R."/>
        </authorList>
    </citation>
    <scope>NUCLEOTIDE SEQUENCE [LARGE SCALE GENOMIC DNA]</scope>
    <source>
        <strain>Pf0-1</strain>
    </source>
</reference>
<protein>
    <recommendedName>
        <fullName evidence="1">Probable septum site-determining protein MinC</fullName>
    </recommendedName>
</protein>
<keyword id="KW-0131">Cell cycle</keyword>
<keyword id="KW-0132">Cell division</keyword>
<keyword id="KW-0717">Septation</keyword>
<dbReference type="EMBL" id="CP000094">
    <property type="protein sequence ID" value="ABA73438.1"/>
    <property type="molecule type" value="Genomic_DNA"/>
</dbReference>
<dbReference type="RefSeq" id="WP_011333183.1">
    <property type="nucleotide sequence ID" value="NC_007492.2"/>
</dbReference>
<dbReference type="SMR" id="Q3KFL8"/>
<dbReference type="KEGG" id="pfo:Pfl01_1695"/>
<dbReference type="eggNOG" id="COG0850">
    <property type="taxonomic scope" value="Bacteria"/>
</dbReference>
<dbReference type="HOGENOM" id="CLU_067812_0_1_6"/>
<dbReference type="Proteomes" id="UP000002704">
    <property type="component" value="Chromosome"/>
</dbReference>
<dbReference type="GO" id="GO:0000902">
    <property type="term" value="P:cell morphogenesis"/>
    <property type="evidence" value="ECO:0007669"/>
    <property type="project" value="InterPro"/>
</dbReference>
<dbReference type="GO" id="GO:0000917">
    <property type="term" value="P:division septum assembly"/>
    <property type="evidence" value="ECO:0007669"/>
    <property type="project" value="UniProtKB-KW"/>
</dbReference>
<dbReference type="GO" id="GO:0051302">
    <property type="term" value="P:regulation of cell division"/>
    <property type="evidence" value="ECO:0007669"/>
    <property type="project" value="InterPro"/>
</dbReference>
<dbReference type="GO" id="GO:1901891">
    <property type="term" value="P:regulation of cell septum assembly"/>
    <property type="evidence" value="ECO:0007669"/>
    <property type="project" value="InterPro"/>
</dbReference>
<dbReference type="Gene3D" id="2.160.20.70">
    <property type="match status" value="1"/>
</dbReference>
<dbReference type="Gene3D" id="3.30.70.260">
    <property type="match status" value="1"/>
</dbReference>
<dbReference type="HAMAP" id="MF_00267">
    <property type="entry name" value="MinC"/>
    <property type="match status" value="1"/>
</dbReference>
<dbReference type="InterPro" id="IPR016098">
    <property type="entry name" value="CAP/MinC_C"/>
</dbReference>
<dbReference type="InterPro" id="IPR013033">
    <property type="entry name" value="MinC"/>
</dbReference>
<dbReference type="InterPro" id="IPR036145">
    <property type="entry name" value="MinC_C_sf"/>
</dbReference>
<dbReference type="InterPro" id="IPR007874">
    <property type="entry name" value="MinC_N"/>
</dbReference>
<dbReference type="InterPro" id="IPR005526">
    <property type="entry name" value="Septum_form_inhib_MinC_C"/>
</dbReference>
<dbReference type="NCBIfam" id="TIGR01222">
    <property type="entry name" value="minC"/>
    <property type="match status" value="1"/>
</dbReference>
<dbReference type="PANTHER" id="PTHR34108">
    <property type="entry name" value="SEPTUM SITE-DETERMINING PROTEIN MINC"/>
    <property type="match status" value="1"/>
</dbReference>
<dbReference type="PANTHER" id="PTHR34108:SF1">
    <property type="entry name" value="SEPTUM SITE-DETERMINING PROTEIN MINC"/>
    <property type="match status" value="1"/>
</dbReference>
<dbReference type="Pfam" id="PF03775">
    <property type="entry name" value="MinC_C"/>
    <property type="match status" value="1"/>
</dbReference>
<dbReference type="Pfam" id="PF05209">
    <property type="entry name" value="MinC_N"/>
    <property type="match status" value="1"/>
</dbReference>
<dbReference type="SUPFAM" id="SSF63848">
    <property type="entry name" value="Cell-division inhibitor MinC, C-terminal domain"/>
    <property type="match status" value="1"/>
</dbReference>